<dbReference type="EMBL" id="HO417223">
    <property type="status" value="NOT_ANNOTATED_CDS"/>
    <property type="molecule type" value="mRNA"/>
</dbReference>
<dbReference type="EMBL" id="HO424356">
    <property type="status" value="NOT_ANNOTATED_CDS"/>
    <property type="molecule type" value="mRNA"/>
</dbReference>
<dbReference type="SMR" id="P0DI72"/>
<dbReference type="GO" id="GO:0005886">
    <property type="term" value="C:plasma membrane"/>
    <property type="evidence" value="ECO:0007669"/>
    <property type="project" value="UniProtKB-SubCell"/>
</dbReference>
<dbReference type="InterPro" id="IPR008253">
    <property type="entry name" value="Marvel"/>
</dbReference>
<dbReference type="Pfam" id="PF01284">
    <property type="entry name" value="MARVEL"/>
    <property type="match status" value="1"/>
</dbReference>
<dbReference type="PROSITE" id="PS51225">
    <property type="entry name" value="MARVEL"/>
    <property type="match status" value="1"/>
</dbReference>
<feature type="chain" id="PRO_0000418714" description="CASP-like protein 0U1">
    <location>
        <begin position="1"/>
        <end position="162"/>
    </location>
</feature>
<feature type="topological domain" description="Cytoplasmic" evidence="2">
    <location>
        <begin position="1"/>
        <end position="11"/>
    </location>
</feature>
<feature type="transmembrane region" description="Helical" evidence="2">
    <location>
        <begin position="12"/>
        <end position="32"/>
    </location>
</feature>
<feature type="topological domain" description="Extracellular" evidence="2">
    <location>
        <begin position="33"/>
        <end position="43"/>
    </location>
</feature>
<feature type="transmembrane region" description="Helical" evidence="2">
    <location>
        <begin position="44"/>
        <end position="64"/>
    </location>
</feature>
<feature type="topological domain" description="Cytoplasmic" evidence="2">
    <location>
        <begin position="65"/>
        <end position="69"/>
    </location>
</feature>
<feature type="transmembrane region" description="Helical" evidence="2">
    <location>
        <begin position="70"/>
        <end position="90"/>
    </location>
</feature>
<feature type="topological domain" description="Extracellular" evidence="2">
    <location>
        <begin position="91"/>
        <end position="123"/>
    </location>
</feature>
<feature type="transmembrane region" description="Helical" evidence="2">
    <location>
        <begin position="124"/>
        <end position="144"/>
    </location>
</feature>
<feature type="topological domain" description="Cytoplasmic" evidence="2">
    <location>
        <begin position="145"/>
        <end position="162"/>
    </location>
</feature>
<feature type="glycosylation site" description="N-linked (GlcNAc...) asparagine" evidence="2">
    <location>
        <position position="96"/>
    </location>
</feature>
<feature type="sequence conflict" description="In Ref. 1; HO424356." evidence="3" ref="1">
    <original>V</original>
    <variation>G</variation>
    <location>
        <position position="162"/>
    </location>
</feature>
<name>CSPL1_CHLAT</name>
<organism>
    <name type="scientific">Chlorokybus atmophyticus</name>
    <name type="common">Soil alga</name>
    <dbReference type="NCBI Taxonomy" id="3144"/>
    <lineage>
        <taxon>Eukaryota</taxon>
        <taxon>Viridiplantae</taxon>
        <taxon>Streptophyta</taxon>
        <taxon>Chlorokybophyceae</taxon>
        <taxon>Chlorokybales</taxon>
        <taxon>Chlorokybaceae</taxon>
        <taxon>Chlorokybus</taxon>
    </lineage>
</organism>
<evidence type="ECO:0000250" key="1"/>
<evidence type="ECO:0000255" key="2"/>
<evidence type="ECO:0000305" key="3"/>
<proteinExistence type="evidence at transcript level"/>
<comment type="subunit">
    <text evidence="1">Homodimer and heterodimers.</text>
</comment>
<comment type="subcellular location">
    <subcellularLocation>
        <location evidence="1">Cell membrane</location>
        <topology evidence="1">Multi-pass membrane protein</topology>
    </subcellularLocation>
</comment>
<comment type="similarity">
    <text evidence="3">Belongs to the Casparian strip membrane proteins (CASP) family.</text>
</comment>
<reference key="1">
    <citation type="journal article" date="2012" name="PLoS ONE">
        <title>Broad phylogenomic sampling and the sister lineage of land plants.</title>
        <authorList>
            <person name="Timme R.E."/>
            <person name="Bachvaroff T.R."/>
            <person name="Delwiche C.F."/>
        </authorList>
    </citation>
    <scope>NUCLEOTIDE SEQUENCE [MRNA]</scope>
    <source>
        <strain>cv. UTEX 2591</strain>
    </source>
</reference>
<reference key="2">
    <citation type="journal article" date="2014" name="Plant Physiol.">
        <title>Functional and evolutionary analysis of the CASPARIAN STRIP MEMBRANE DOMAIN PROTEIN family.</title>
        <authorList>
            <person name="Roppolo D."/>
            <person name="Boeckmann B."/>
            <person name="Pfister A."/>
            <person name="Boutet E."/>
            <person name="Rubio M.C."/>
            <person name="Denervaud-Tendon V."/>
            <person name="Vermeer J.E."/>
            <person name="Gheyselinck J."/>
            <person name="Xenarios I."/>
            <person name="Geldner N."/>
        </authorList>
    </citation>
    <scope>GENE FAMILY</scope>
    <scope>NOMENCLATURE</scope>
</reference>
<keyword id="KW-1003">Cell membrane</keyword>
<keyword id="KW-0325">Glycoprotein</keyword>
<keyword id="KW-0472">Membrane</keyword>
<keyword id="KW-0812">Transmembrane</keyword>
<keyword id="KW-1133">Transmembrane helix</keyword>
<accession>P0DI72</accession>
<sequence>MAAVEAAKTPRFILLIIEWVFALVAFAVMGHYLFDDRRSSFEYLTAICILVWLVVMIYMVILCCGRALPPLIEAAIFLLFAILVFIAFLVTAVKCNNSETIVIAGQTISRKVCEGESEPKAAAAFAFLLGLLLAGSSVLGCIAFRRPSAPPLSSFQNPTSSV</sequence>
<protein>
    <recommendedName>
        <fullName>CASP-like protein 0U1</fullName>
        <shortName>CaCASPL0U1</shortName>
    </recommendedName>
</protein>